<organism>
    <name type="scientific">Staphylococcus aureus (strain USA300 / TCH1516)</name>
    <dbReference type="NCBI Taxonomy" id="451516"/>
    <lineage>
        <taxon>Bacteria</taxon>
        <taxon>Bacillati</taxon>
        <taxon>Bacillota</taxon>
        <taxon>Bacilli</taxon>
        <taxon>Bacillales</taxon>
        <taxon>Staphylococcaceae</taxon>
        <taxon>Staphylococcus</taxon>
    </lineage>
</organism>
<evidence type="ECO:0000255" key="1">
    <source>
        <dbReference type="HAMAP-Rule" id="MF_01684"/>
    </source>
</evidence>
<proteinExistence type="inferred from homology"/>
<dbReference type="EC" id="3.2.2.9" evidence="1"/>
<dbReference type="EMBL" id="CP000730">
    <property type="protein sequence ID" value="ABX29607.1"/>
    <property type="molecule type" value="Genomic_DNA"/>
</dbReference>
<dbReference type="RefSeq" id="WP_000579275.1">
    <property type="nucleotide sequence ID" value="NC_010079.1"/>
</dbReference>
<dbReference type="SMR" id="A8Z4D8"/>
<dbReference type="KEGG" id="sax:USA300HOU_1600"/>
<dbReference type="HOGENOM" id="CLU_031248_2_2_9"/>
<dbReference type="UniPathway" id="UPA00904">
    <property type="reaction ID" value="UER00871"/>
</dbReference>
<dbReference type="GO" id="GO:0005829">
    <property type="term" value="C:cytosol"/>
    <property type="evidence" value="ECO:0007669"/>
    <property type="project" value="TreeGrafter"/>
</dbReference>
<dbReference type="GO" id="GO:0008782">
    <property type="term" value="F:adenosylhomocysteine nucleosidase activity"/>
    <property type="evidence" value="ECO:0007669"/>
    <property type="project" value="UniProtKB-UniRule"/>
</dbReference>
<dbReference type="GO" id="GO:0008930">
    <property type="term" value="F:methylthioadenosine nucleosidase activity"/>
    <property type="evidence" value="ECO:0007669"/>
    <property type="project" value="UniProtKB-UniRule"/>
</dbReference>
<dbReference type="GO" id="GO:0019509">
    <property type="term" value="P:L-methionine salvage from methylthioadenosine"/>
    <property type="evidence" value="ECO:0007669"/>
    <property type="project" value="UniProtKB-UniRule"/>
</dbReference>
<dbReference type="GO" id="GO:0019284">
    <property type="term" value="P:L-methionine salvage from S-adenosylmethionine"/>
    <property type="evidence" value="ECO:0007669"/>
    <property type="project" value="TreeGrafter"/>
</dbReference>
<dbReference type="GO" id="GO:0009164">
    <property type="term" value="P:nucleoside catabolic process"/>
    <property type="evidence" value="ECO:0007669"/>
    <property type="project" value="InterPro"/>
</dbReference>
<dbReference type="CDD" id="cd09008">
    <property type="entry name" value="MTAN"/>
    <property type="match status" value="1"/>
</dbReference>
<dbReference type="FunFam" id="3.40.50.1580:FF:000001">
    <property type="entry name" value="MTA/SAH nucleosidase family protein"/>
    <property type="match status" value="1"/>
</dbReference>
<dbReference type="Gene3D" id="3.40.50.1580">
    <property type="entry name" value="Nucleoside phosphorylase domain"/>
    <property type="match status" value="1"/>
</dbReference>
<dbReference type="HAMAP" id="MF_01684">
    <property type="entry name" value="Salvage_MtnN"/>
    <property type="match status" value="1"/>
</dbReference>
<dbReference type="InterPro" id="IPR010049">
    <property type="entry name" value="MTA_SAH_Nsdase"/>
</dbReference>
<dbReference type="InterPro" id="IPR000845">
    <property type="entry name" value="Nucleoside_phosphorylase_d"/>
</dbReference>
<dbReference type="InterPro" id="IPR035994">
    <property type="entry name" value="Nucleoside_phosphorylase_sf"/>
</dbReference>
<dbReference type="NCBIfam" id="TIGR01704">
    <property type="entry name" value="MTA_SAH-Nsdase"/>
    <property type="match status" value="1"/>
</dbReference>
<dbReference type="NCBIfam" id="NF004079">
    <property type="entry name" value="PRK05584.1"/>
    <property type="match status" value="1"/>
</dbReference>
<dbReference type="PANTHER" id="PTHR46832">
    <property type="entry name" value="5'-METHYLTHIOADENOSINE/S-ADENOSYLHOMOCYSTEINE NUCLEOSIDASE"/>
    <property type="match status" value="1"/>
</dbReference>
<dbReference type="PANTHER" id="PTHR46832:SF1">
    <property type="entry name" value="5'-METHYLTHIOADENOSINE_S-ADENOSYLHOMOCYSTEINE NUCLEOSIDASE"/>
    <property type="match status" value="1"/>
</dbReference>
<dbReference type="Pfam" id="PF01048">
    <property type="entry name" value="PNP_UDP_1"/>
    <property type="match status" value="1"/>
</dbReference>
<dbReference type="SUPFAM" id="SSF53167">
    <property type="entry name" value="Purine and uridine phosphorylases"/>
    <property type="match status" value="1"/>
</dbReference>
<reference key="1">
    <citation type="journal article" date="2007" name="BMC Microbiol.">
        <title>Subtle genetic changes enhance virulence of methicillin resistant and sensitive Staphylococcus aureus.</title>
        <authorList>
            <person name="Highlander S.K."/>
            <person name="Hulten K.G."/>
            <person name="Qin X."/>
            <person name="Jiang H."/>
            <person name="Yerrapragada S."/>
            <person name="Mason E.O. Jr."/>
            <person name="Shang Y."/>
            <person name="Williams T.M."/>
            <person name="Fortunov R.M."/>
            <person name="Liu Y."/>
            <person name="Igboeli O."/>
            <person name="Petrosino J."/>
            <person name="Tirumalai M."/>
            <person name="Uzman A."/>
            <person name="Fox G.E."/>
            <person name="Cardenas A.M."/>
            <person name="Muzny D.M."/>
            <person name="Hemphill L."/>
            <person name="Ding Y."/>
            <person name="Dugan S."/>
            <person name="Blyth P.R."/>
            <person name="Buhay C.J."/>
            <person name="Dinh H.H."/>
            <person name="Hawes A.C."/>
            <person name="Holder M."/>
            <person name="Kovar C.L."/>
            <person name="Lee S.L."/>
            <person name="Liu W."/>
            <person name="Nazareth L.V."/>
            <person name="Wang Q."/>
            <person name="Zhou J."/>
            <person name="Kaplan S.L."/>
            <person name="Weinstock G.M."/>
        </authorList>
    </citation>
    <scope>NUCLEOTIDE SEQUENCE [LARGE SCALE GENOMIC DNA]</scope>
    <source>
        <strain>USA300 / TCH1516</strain>
    </source>
</reference>
<keyword id="KW-0028">Amino-acid biosynthesis</keyword>
<keyword id="KW-0378">Hydrolase</keyword>
<keyword id="KW-0486">Methionine biosynthesis</keyword>
<comment type="function">
    <text evidence="1">Catalyzes the irreversible cleavage of the glycosidic bond in both 5'-methylthioadenosine (MTA) and S-adenosylhomocysteine (SAH/AdoHcy) to adenine and the corresponding thioribose, 5'-methylthioribose and S-ribosylhomocysteine, respectively. Also cleaves 5'-deoxyadenosine, a toxic by-product of radical S-adenosylmethionine (SAM) enzymes, into 5-deoxyribose and adenine.</text>
</comment>
<comment type="catalytic activity">
    <reaction evidence="1">
        <text>S-adenosyl-L-homocysteine + H2O = S-(5-deoxy-D-ribos-5-yl)-L-homocysteine + adenine</text>
        <dbReference type="Rhea" id="RHEA:17805"/>
        <dbReference type="ChEBI" id="CHEBI:15377"/>
        <dbReference type="ChEBI" id="CHEBI:16708"/>
        <dbReference type="ChEBI" id="CHEBI:57856"/>
        <dbReference type="ChEBI" id="CHEBI:58195"/>
        <dbReference type="EC" id="3.2.2.9"/>
    </reaction>
</comment>
<comment type="catalytic activity">
    <reaction evidence="1">
        <text>S-methyl-5'-thioadenosine + H2O = 5-(methylsulfanyl)-D-ribose + adenine</text>
        <dbReference type="Rhea" id="RHEA:13617"/>
        <dbReference type="ChEBI" id="CHEBI:15377"/>
        <dbReference type="ChEBI" id="CHEBI:16708"/>
        <dbReference type="ChEBI" id="CHEBI:17509"/>
        <dbReference type="ChEBI" id="CHEBI:78440"/>
        <dbReference type="EC" id="3.2.2.9"/>
    </reaction>
</comment>
<comment type="catalytic activity">
    <reaction evidence="1">
        <text>5'-deoxyadenosine + H2O = 5-deoxy-D-ribose + adenine</text>
        <dbReference type="Rhea" id="RHEA:29859"/>
        <dbReference type="ChEBI" id="CHEBI:15377"/>
        <dbReference type="ChEBI" id="CHEBI:16708"/>
        <dbReference type="ChEBI" id="CHEBI:17319"/>
        <dbReference type="ChEBI" id="CHEBI:149540"/>
        <dbReference type="EC" id="3.2.2.9"/>
    </reaction>
    <physiologicalReaction direction="left-to-right" evidence="1">
        <dbReference type="Rhea" id="RHEA:29860"/>
    </physiologicalReaction>
</comment>
<comment type="pathway">
    <text evidence="1">Amino-acid biosynthesis; L-methionine biosynthesis via salvage pathway; S-methyl-5-thio-alpha-D-ribose 1-phosphate from S-methyl-5'-thioadenosine (hydrolase route): step 1/2.</text>
</comment>
<comment type="similarity">
    <text evidence="1">Belongs to the PNP/UDP phosphorylase family. MtnN subfamily.</text>
</comment>
<feature type="chain" id="PRO_0000359374" description="5'-methylthioadenosine/S-adenosylhomocysteine nucleosidase">
    <location>
        <begin position="1"/>
        <end position="228"/>
    </location>
</feature>
<feature type="active site" description="Proton acceptor" evidence="1">
    <location>
        <position position="11"/>
    </location>
</feature>
<feature type="active site" description="Proton donor" evidence="1">
    <location>
        <position position="196"/>
    </location>
</feature>
<feature type="binding site" evidence="1">
    <location>
        <position position="77"/>
    </location>
    <ligand>
        <name>substrate</name>
    </ligand>
</feature>
<feature type="binding site" evidence="1">
    <location>
        <position position="151"/>
    </location>
    <ligand>
        <name>substrate</name>
    </ligand>
</feature>
<feature type="binding site" evidence="1">
    <location>
        <begin position="172"/>
        <end position="173"/>
    </location>
    <ligand>
        <name>substrate</name>
    </ligand>
</feature>
<gene>
    <name evidence="1" type="primary">mtnN</name>
    <name type="ordered locus">USA300HOU_1600</name>
</gene>
<protein>
    <recommendedName>
        <fullName evidence="1">5'-methylthioadenosine/S-adenosylhomocysteine nucleosidase</fullName>
        <shortName evidence="1">MTA/SAH nucleosidase</shortName>
        <shortName evidence="1">MTAN</shortName>
        <ecNumber evidence="1">3.2.2.9</ecNumber>
    </recommendedName>
    <alternativeName>
        <fullName evidence="1">5'-deoxyadenosine nucleosidase</fullName>
        <shortName evidence="1">DOA nucleosidase</shortName>
        <shortName evidence="1">dAdo nucleosidase</shortName>
    </alternativeName>
    <alternativeName>
        <fullName evidence="1">5'-methylthioadenosine nucleosidase</fullName>
        <shortName evidence="1">MTA nucleosidase</shortName>
    </alternativeName>
    <alternativeName>
        <fullName evidence="1">S-adenosylhomocysteine nucleosidase</fullName>
        <shortName evidence="1">AdoHcy nucleosidase</shortName>
        <shortName evidence="1">SAH nucleosidase</shortName>
        <shortName evidence="1">SRH nucleosidase</shortName>
    </alternativeName>
</protein>
<sequence length="228" mass="24534">MIGIIGAMEEEVTILKNKLTQLSEISVAHVKFYTGILKDREVVITQSGIGKVNAAISTTLLINKFKPDVIINTGSAGALDESLNVGDVLISDDVKYHDADATAFGYEYGQIPQMPVAFQSSKPLIEKVSQVVQQQQLTAKVGLIVSGDSFIGSVEQRQKIKKAFPNAMAVEMEATAIAQTCYQFNVPFVVVRAVSDLANGEAEMSFEAFLEKAAVSSSQTVEALVSQL</sequence>
<name>MTNN_STAAT</name>
<accession>A8Z4D8</accession>